<organism>
    <name type="scientific">Arabidopsis thaliana</name>
    <name type="common">Mouse-ear cress</name>
    <dbReference type="NCBI Taxonomy" id="3702"/>
    <lineage>
        <taxon>Eukaryota</taxon>
        <taxon>Viridiplantae</taxon>
        <taxon>Streptophyta</taxon>
        <taxon>Embryophyta</taxon>
        <taxon>Tracheophyta</taxon>
        <taxon>Spermatophyta</taxon>
        <taxon>Magnoliopsida</taxon>
        <taxon>eudicotyledons</taxon>
        <taxon>Gunneridae</taxon>
        <taxon>Pentapetalae</taxon>
        <taxon>rosids</taxon>
        <taxon>malvids</taxon>
        <taxon>Brassicales</taxon>
        <taxon>Brassicaceae</taxon>
        <taxon>Camelineae</taxon>
        <taxon>Arabidopsis</taxon>
    </lineage>
</organism>
<protein>
    <recommendedName>
        <fullName evidence="2">2,3-bisphosphoglycerate-dependent phosphoglycerate mutase 1</fullName>
        <shortName evidence="2">BPG-dependent PGAM 1</shortName>
        <shortName evidence="2">PGAM 1</shortName>
        <shortName evidence="2">Phosphoglyceromutase 1</shortName>
        <shortName evidence="2">dPGM 1</shortName>
        <ecNumber evidence="2">5.4.2.11</ecNumber>
    </recommendedName>
</protein>
<name>GPMA1_ARATH</name>
<comment type="function">
    <text evidence="2">Catalyzes the interconversion of 2-phosphoglycerate and 3-phosphoglycerate.</text>
</comment>
<comment type="catalytic activity">
    <reaction evidence="2">
        <text>(2R)-2-phosphoglycerate = (2R)-3-phosphoglycerate</text>
        <dbReference type="Rhea" id="RHEA:15901"/>
        <dbReference type="ChEBI" id="CHEBI:58272"/>
        <dbReference type="ChEBI" id="CHEBI:58289"/>
        <dbReference type="EC" id="5.4.2.11"/>
    </reaction>
</comment>
<comment type="pathway">
    <text evidence="2">Carbohydrate degradation; glycolysis; pyruvate from D-glyceraldehyde 3-phosphate: step 3/5.</text>
</comment>
<comment type="subcellular location">
    <subcellularLocation>
        <location evidence="1">Plastid</location>
        <location evidence="1">Chloroplast</location>
    </subcellularLocation>
</comment>
<comment type="similarity">
    <text evidence="2">Belongs to the phosphoglycerate mutase family. BPG-dependent PGAM subfamily.</text>
</comment>
<sequence>MATATSHQSVVSFASLRSSPSSTISQCGFKIDSSLSFTSKKTNFCKIKAMASSVSYDNTLLSPSKTIPDNSQKKSNEAALILIRHGESLWNEKNLFTGCVDVPLTEKGVEEAIEAGKRISNIPVDVIFTSSLIRAQMTAMLAMIQHRRKKVPIILHDESEQAKTWSQVFSDETKNQSIPVIPAWQLNERMYGELQGLNKQETAERYGKEQVHEWRRSYDIPPPKGESLEMCAERAVAYFQDNIEPKLAAGKNVMIAAHGNSLRSIIMYLDKLTCQEVISLELSTGIPLLYIFKEGKFMKRGSPVGPTEAGVYAYTKRLAQYRQKLEDDSEVLCA</sequence>
<reference key="1">
    <citation type="journal article" date="2000" name="Nature">
        <title>Sequence and analysis of chromosome 1 of the plant Arabidopsis thaliana.</title>
        <authorList>
            <person name="Theologis A."/>
            <person name="Ecker J.R."/>
            <person name="Palm C.J."/>
            <person name="Federspiel N.A."/>
            <person name="Kaul S."/>
            <person name="White O."/>
            <person name="Alonso J."/>
            <person name="Altafi H."/>
            <person name="Araujo R."/>
            <person name="Bowman C.L."/>
            <person name="Brooks S.Y."/>
            <person name="Buehler E."/>
            <person name="Chan A."/>
            <person name="Chao Q."/>
            <person name="Chen H."/>
            <person name="Cheuk R.F."/>
            <person name="Chin C.W."/>
            <person name="Chung M.K."/>
            <person name="Conn L."/>
            <person name="Conway A.B."/>
            <person name="Conway A.R."/>
            <person name="Creasy T.H."/>
            <person name="Dewar K."/>
            <person name="Dunn P."/>
            <person name="Etgu P."/>
            <person name="Feldblyum T.V."/>
            <person name="Feng J.-D."/>
            <person name="Fong B."/>
            <person name="Fujii C.Y."/>
            <person name="Gill J.E."/>
            <person name="Goldsmith A.D."/>
            <person name="Haas B."/>
            <person name="Hansen N.F."/>
            <person name="Hughes B."/>
            <person name="Huizar L."/>
            <person name="Hunter J.L."/>
            <person name="Jenkins J."/>
            <person name="Johnson-Hopson C."/>
            <person name="Khan S."/>
            <person name="Khaykin E."/>
            <person name="Kim C.J."/>
            <person name="Koo H.L."/>
            <person name="Kremenetskaia I."/>
            <person name="Kurtz D.B."/>
            <person name="Kwan A."/>
            <person name="Lam B."/>
            <person name="Langin-Hooper S."/>
            <person name="Lee A."/>
            <person name="Lee J.M."/>
            <person name="Lenz C.A."/>
            <person name="Li J.H."/>
            <person name="Li Y.-P."/>
            <person name="Lin X."/>
            <person name="Liu S.X."/>
            <person name="Liu Z.A."/>
            <person name="Luros J.S."/>
            <person name="Maiti R."/>
            <person name="Marziali A."/>
            <person name="Militscher J."/>
            <person name="Miranda M."/>
            <person name="Nguyen M."/>
            <person name="Nierman W.C."/>
            <person name="Osborne B.I."/>
            <person name="Pai G."/>
            <person name="Peterson J."/>
            <person name="Pham P.K."/>
            <person name="Rizzo M."/>
            <person name="Rooney T."/>
            <person name="Rowley D."/>
            <person name="Sakano H."/>
            <person name="Salzberg S.L."/>
            <person name="Schwartz J.R."/>
            <person name="Shinn P."/>
            <person name="Southwick A.M."/>
            <person name="Sun H."/>
            <person name="Tallon L.J."/>
            <person name="Tambunga G."/>
            <person name="Toriumi M.J."/>
            <person name="Town C.D."/>
            <person name="Utterback T."/>
            <person name="Van Aken S."/>
            <person name="Vaysberg M."/>
            <person name="Vysotskaia V.S."/>
            <person name="Walker M."/>
            <person name="Wu D."/>
            <person name="Yu G."/>
            <person name="Fraser C.M."/>
            <person name="Venter J.C."/>
            <person name="Davis R.W."/>
        </authorList>
    </citation>
    <scope>NUCLEOTIDE SEQUENCE [LARGE SCALE GENOMIC DNA]</scope>
    <source>
        <strain>cv. Columbia</strain>
    </source>
</reference>
<reference key="2">
    <citation type="journal article" date="2017" name="Plant J.">
        <title>Araport11: a complete reannotation of the Arabidopsis thaliana reference genome.</title>
        <authorList>
            <person name="Cheng C.Y."/>
            <person name="Krishnakumar V."/>
            <person name="Chan A.P."/>
            <person name="Thibaud-Nissen F."/>
            <person name="Schobel S."/>
            <person name="Town C.D."/>
        </authorList>
    </citation>
    <scope>GENOME REANNOTATION</scope>
    <source>
        <strain>cv. Columbia</strain>
    </source>
</reference>
<reference key="3">
    <citation type="journal article" date="2003" name="Science">
        <title>Empirical analysis of transcriptional activity in the Arabidopsis genome.</title>
        <authorList>
            <person name="Yamada K."/>
            <person name="Lim J."/>
            <person name="Dale J.M."/>
            <person name="Chen H."/>
            <person name="Shinn P."/>
            <person name="Palm C.J."/>
            <person name="Southwick A.M."/>
            <person name="Wu H.C."/>
            <person name="Kim C.J."/>
            <person name="Nguyen M."/>
            <person name="Pham P.K."/>
            <person name="Cheuk R.F."/>
            <person name="Karlin-Newmann G."/>
            <person name="Liu S.X."/>
            <person name="Lam B."/>
            <person name="Sakano H."/>
            <person name="Wu T."/>
            <person name="Yu G."/>
            <person name="Miranda M."/>
            <person name="Quach H.L."/>
            <person name="Tripp M."/>
            <person name="Chang C.H."/>
            <person name="Lee J.M."/>
            <person name="Toriumi M.J."/>
            <person name="Chan M.M."/>
            <person name="Tang C.C."/>
            <person name="Onodera C.S."/>
            <person name="Deng J.M."/>
            <person name="Akiyama K."/>
            <person name="Ansari Y."/>
            <person name="Arakawa T."/>
            <person name="Banh J."/>
            <person name="Banno F."/>
            <person name="Bowser L."/>
            <person name="Brooks S.Y."/>
            <person name="Carninci P."/>
            <person name="Chao Q."/>
            <person name="Choy N."/>
            <person name="Enju A."/>
            <person name="Goldsmith A.D."/>
            <person name="Gurjal M."/>
            <person name="Hansen N.F."/>
            <person name="Hayashizaki Y."/>
            <person name="Johnson-Hopson C."/>
            <person name="Hsuan V.W."/>
            <person name="Iida K."/>
            <person name="Karnes M."/>
            <person name="Khan S."/>
            <person name="Koesema E."/>
            <person name="Ishida J."/>
            <person name="Jiang P.X."/>
            <person name="Jones T."/>
            <person name="Kawai J."/>
            <person name="Kamiya A."/>
            <person name="Meyers C."/>
            <person name="Nakajima M."/>
            <person name="Narusaka M."/>
            <person name="Seki M."/>
            <person name="Sakurai T."/>
            <person name="Satou M."/>
            <person name="Tamse R."/>
            <person name="Vaysberg M."/>
            <person name="Wallender E.K."/>
            <person name="Wong C."/>
            <person name="Yamamura Y."/>
            <person name="Yuan S."/>
            <person name="Shinozaki K."/>
            <person name="Davis R.W."/>
            <person name="Theologis A."/>
            <person name="Ecker J.R."/>
        </authorList>
    </citation>
    <scope>NUCLEOTIDE SEQUENCE [LARGE SCALE MRNA]</scope>
    <source>
        <strain>cv. Columbia</strain>
    </source>
</reference>
<reference key="4">
    <citation type="submission" date="2004-12" db="EMBL/GenBank/DDBJ databases">
        <title>Arabidopsis ORF clones.</title>
        <authorList>
            <person name="Cheuk R.F."/>
            <person name="Chen H."/>
            <person name="Kim C.J."/>
            <person name="Shinn P."/>
            <person name="Ecker J.R."/>
        </authorList>
    </citation>
    <scope>NUCLEOTIDE SEQUENCE [LARGE SCALE MRNA]</scope>
    <source>
        <strain>cv. Columbia</strain>
    </source>
</reference>
<reference key="5">
    <citation type="submission" date="2002-03" db="EMBL/GenBank/DDBJ databases">
        <title>Full-length cDNA from Arabidopsis thaliana.</title>
        <authorList>
            <person name="Brover V.V."/>
            <person name="Troukhan M.E."/>
            <person name="Alexandrov N.A."/>
            <person name="Lu Y.-P."/>
            <person name="Flavell R.B."/>
            <person name="Feldmann K.A."/>
        </authorList>
    </citation>
    <scope>NUCLEOTIDE SEQUENCE [LARGE SCALE MRNA]</scope>
</reference>
<reference key="6">
    <citation type="journal article" date="2004" name="Plant Physiol.">
        <title>Genomic analysis of the nitrate response using a nitrate reductase-null mutant of Arabidopsis.</title>
        <authorList>
            <person name="Wang R."/>
            <person name="Tischner R."/>
            <person name="Gutierrez R.A."/>
            <person name="Hoffman M."/>
            <person name="Xing X."/>
            <person name="Chen M."/>
            <person name="Coruzzi G."/>
            <person name="Crawford N.M."/>
        </authorList>
    </citation>
    <scope>REVIEW</scope>
</reference>
<feature type="transit peptide" description="Chloroplast" evidence="1">
    <location>
        <begin position="1"/>
        <end position="48"/>
    </location>
</feature>
<feature type="chain" id="PRO_0000450719" description="2,3-bisphosphoglycerate-dependent phosphoglycerate mutase 1">
    <location>
        <begin position="49"/>
        <end position="334"/>
    </location>
</feature>
<feature type="active site" description="Tele-phosphohistidine intermediate" evidence="2">
    <location>
        <position position="85"/>
    </location>
</feature>
<feature type="active site" description="Proton donor/acceptor" evidence="2">
    <location>
        <position position="188"/>
    </location>
</feature>
<feature type="binding site" evidence="2">
    <location>
        <begin position="84"/>
        <end position="91"/>
    </location>
    <ligand>
        <name>substrate</name>
    </ligand>
</feature>
<feature type="binding site" evidence="2">
    <location>
        <begin position="97"/>
        <end position="98"/>
    </location>
    <ligand>
        <name>substrate</name>
    </ligand>
</feature>
<feature type="binding site" evidence="2">
    <location>
        <position position="134"/>
    </location>
    <ligand>
        <name>substrate</name>
    </ligand>
</feature>
<feature type="binding site" evidence="2">
    <location>
        <begin position="188"/>
        <end position="191"/>
    </location>
    <ligand>
        <name>substrate</name>
    </ligand>
</feature>
<feature type="binding site" evidence="2">
    <location>
        <position position="199"/>
    </location>
    <ligand>
        <name>substrate</name>
    </ligand>
</feature>
<feature type="binding site" evidence="2">
    <location>
        <begin position="215"/>
        <end position="216"/>
    </location>
    <ligand>
        <name>substrate</name>
    </ligand>
</feature>
<feature type="binding site" evidence="2">
    <location>
        <begin position="259"/>
        <end position="260"/>
    </location>
    <ligand>
        <name>substrate</name>
    </ligand>
</feature>
<feature type="site" description="Transition state stabilizer" evidence="2">
    <location>
        <position position="258"/>
    </location>
</feature>
<feature type="sequence conflict" description="In Ref. 5; AAM67325." evidence="3" ref="5">
    <original>YD</original>
    <variation>FN</variation>
    <location>
        <begin position="56"/>
        <end position="57"/>
    </location>
</feature>
<feature type="sequence conflict" description="In Ref. 3; AAM53331." evidence="3" ref="3">
    <original>H</original>
    <variation>R</variation>
    <location>
        <position position="85"/>
    </location>
</feature>
<gene>
    <name evidence="2" type="primary">gpmA1</name>
    <name evidence="4" type="ordered locus">At1g22170</name>
    <name evidence="5" type="ORF">F16L1.10</name>
</gene>
<keyword id="KW-0150">Chloroplast</keyword>
<keyword id="KW-0312">Gluconeogenesis</keyword>
<keyword id="KW-0324">Glycolysis</keyword>
<keyword id="KW-0413">Isomerase</keyword>
<keyword id="KW-0934">Plastid</keyword>
<keyword id="KW-1185">Reference proteome</keyword>
<keyword id="KW-0809">Transit peptide</keyword>
<dbReference type="EC" id="5.4.2.11" evidence="2"/>
<dbReference type="EMBL" id="AC073942">
    <property type="protein sequence ID" value="AAF87856.1"/>
    <property type="molecule type" value="Genomic_DNA"/>
</dbReference>
<dbReference type="EMBL" id="CP002684">
    <property type="protein sequence ID" value="AEE30205.1"/>
    <property type="molecule type" value="Genomic_DNA"/>
</dbReference>
<dbReference type="EMBL" id="CP002684">
    <property type="protein sequence ID" value="ANM58755.1"/>
    <property type="molecule type" value="Genomic_DNA"/>
</dbReference>
<dbReference type="EMBL" id="AY120773">
    <property type="protein sequence ID" value="AAM53331.1"/>
    <property type="molecule type" value="mRNA"/>
</dbReference>
<dbReference type="EMBL" id="BT020337">
    <property type="protein sequence ID" value="AAV85692.1"/>
    <property type="molecule type" value="mRNA"/>
</dbReference>
<dbReference type="EMBL" id="AY087272">
    <property type="protein sequence ID" value="AAM67325.1"/>
    <property type="molecule type" value="mRNA"/>
</dbReference>
<dbReference type="PIR" id="C86354">
    <property type="entry name" value="C86354"/>
</dbReference>
<dbReference type="RefSeq" id="NP_001321168.1">
    <property type="nucleotide sequence ID" value="NM_001332541.1"/>
</dbReference>
<dbReference type="RefSeq" id="NP_564161.1">
    <property type="nucleotide sequence ID" value="NM_102067.3"/>
</dbReference>
<dbReference type="SMR" id="Q9LM13"/>
<dbReference type="FunCoup" id="Q9LM13">
    <property type="interactions" value="1868"/>
</dbReference>
<dbReference type="STRING" id="3702.Q9LM13"/>
<dbReference type="GlyGen" id="Q9LM13">
    <property type="glycosylation" value="1 site"/>
</dbReference>
<dbReference type="iPTMnet" id="Q9LM13"/>
<dbReference type="PaxDb" id="3702-AT1G22170.1"/>
<dbReference type="ProteomicsDB" id="181750"/>
<dbReference type="EnsemblPlants" id="AT1G22170.1">
    <property type="protein sequence ID" value="AT1G22170.1"/>
    <property type="gene ID" value="AT1G22170"/>
</dbReference>
<dbReference type="EnsemblPlants" id="AT1G22170.2">
    <property type="protein sequence ID" value="AT1G22170.2"/>
    <property type="gene ID" value="AT1G22170"/>
</dbReference>
<dbReference type="GeneID" id="838822"/>
<dbReference type="Gramene" id="AT1G22170.1">
    <property type="protein sequence ID" value="AT1G22170.1"/>
    <property type="gene ID" value="AT1G22170"/>
</dbReference>
<dbReference type="Gramene" id="AT1G22170.2">
    <property type="protein sequence ID" value="AT1G22170.2"/>
    <property type="gene ID" value="AT1G22170"/>
</dbReference>
<dbReference type="KEGG" id="ath:AT1G22170"/>
<dbReference type="Araport" id="AT1G22170"/>
<dbReference type="TAIR" id="AT1G22170"/>
<dbReference type="eggNOG" id="KOG0235">
    <property type="taxonomic scope" value="Eukaryota"/>
</dbReference>
<dbReference type="HOGENOM" id="CLU_033323_1_2_1"/>
<dbReference type="InParanoid" id="Q9LM13"/>
<dbReference type="OMA" id="MLPYWYD"/>
<dbReference type="OrthoDB" id="354304at2759"/>
<dbReference type="PhylomeDB" id="Q9LM13"/>
<dbReference type="BioCyc" id="ARA:AT1G22170-MONOMER"/>
<dbReference type="UniPathway" id="UPA00109">
    <property type="reaction ID" value="UER00186"/>
</dbReference>
<dbReference type="PRO" id="PR:Q9LM13"/>
<dbReference type="Proteomes" id="UP000006548">
    <property type="component" value="Chromosome 1"/>
</dbReference>
<dbReference type="ExpressionAtlas" id="Q9LM13">
    <property type="expression patterns" value="baseline and differential"/>
</dbReference>
<dbReference type="GO" id="GO:0009507">
    <property type="term" value="C:chloroplast"/>
    <property type="evidence" value="ECO:0007669"/>
    <property type="project" value="UniProtKB-SubCell"/>
</dbReference>
<dbReference type="GO" id="GO:0004619">
    <property type="term" value="F:phosphoglycerate mutase activity"/>
    <property type="evidence" value="ECO:0007669"/>
    <property type="project" value="UniProtKB-EC"/>
</dbReference>
<dbReference type="GO" id="GO:0006094">
    <property type="term" value="P:gluconeogenesis"/>
    <property type="evidence" value="ECO:0007669"/>
    <property type="project" value="UniProtKB-KW"/>
</dbReference>
<dbReference type="GO" id="GO:0006096">
    <property type="term" value="P:glycolytic process"/>
    <property type="evidence" value="ECO:0007669"/>
    <property type="project" value="UniProtKB-UniPathway"/>
</dbReference>
<dbReference type="CDD" id="cd07067">
    <property type="entry name" value="HP_PGM_like"/>
    <property type="match status" value="1"/>
</dbReference>
<dbReference type="Gene3D" id="3.40.50.1240">
    <property type="entry name" value="Phosphoglycerate mutase-like"/>
    <property type="match status" value="1"/>
</dbReference>
<dbReference type="HAMAP" id="MF_01039">
    <property type="entry name" value="PGAM_GpmA"/>
    <property type="match status" value="1"/>
</dbReference>
<dbReference type="InterPro" id="IPR013078">
    <property type="entry name" value="His_Pase_superF_clade-1"/>
</dbReference>
<dbReference type="InterPro" id="IPR029033">
    <property type="entry name" value="His_PPase_superfam"/>
</dbReference>
<dbReference type="InterPro" id="IPR001345">
    <property type="entry name" value="PG/BPGM_mutase_AS"/>
</dbReference>
<dbReference type="InterPro" id="IPR005952">
    <property type="entry name" value="Phosphogly_mut1"/>
</dbReference>
<dbReference type="NCBIfam" id="NF002217">
    <property type="entry name" value="PRK01112.1"/>
    <property type="match status" value="1"/>
</dbReference>
<dbReference type="PANTHER" id="PTHR11931">
    <property type="entry name" value="PHOSPHOGLYCERATE MUTASE"/>
    <property type="match status" value="1"/>
</dbReference>
<dbReference type="Pfam" id="PF00300">
    <property type="entry name" value="His_Phos_1"/>
    <property type="match status" value="2"/>
</dbReference>
<dbReference type="SMART" id="SM00855">
    <property type="entry name" value="PGAM"/>
    <property type="match status" value="1"/>
</dbReference>
<dbReference type="SUPFAM" id="SSF53254">
    <property type="entry name" value="Phosphoglycerate mutase-like"/>
    <property type="match status" value="1"/>
</dbReference>
<dbReference type="PROSITE" id="PS00175">
    <property type="entry name" value="PG_MUTASE"/>
    <property type="match status" value="1"/>
</dbReference>
<evidence type="ECO:0000255" key="1"/>
<evidence type="ECO:0000255" key="2">
    <source>
        <dbReference type="HAMAP-Rule" id="MF_01039"/>
    </source>
</evidence>
<evidence type="ECO:0000305" key="3"/>
<evidence type="ECO:0000312" key="4">
    <source>
        <dbReference type="Araport" id="AT1G22170"/>
    </source>
</evidence>
<evidence type="ECO:0000312" key="5">
    <source>
        <dbReference type="EMBL" id="AAF87856.1"/>
    </source>
</evidence>
<accession>Q9LM13</accession>
<accession>Q8L832</accession>
<accession>Q8LBD7</accession>
<proteinExistence type="evidence at transcript level"/>